<feature type="chain" id="PRO_0000371865" description="NADH-quinone oxidoreductase subunit D">
    <location>
        <begin position="1"/>
        <end position="417"/>
    </location>
</feature>
<dbReference type="EC" id="7.1.1.-" evidence="1"/>
<dbReference type="EMBL" id="CP000803">
    <property type="protein sequence ID" value="ABU62410.1"/>
    <property type="molecule type" value="Genomic_DNA"/>
</dbReference>
<dbReference type="RefSeq" id="WP_003017384.1">
    <property type="nucleotide sequence ID" value="NC_009749.1"/>
</dbReference>
<dbReference type="SMR" id="A7NEK7"/>
<dbReference type="KEGG" id="fta:FTA_1935"/>
<dbReference type="HOGENOM" id="CLU_015134_1_1_6"/>
<dbReference type="GO" id="GO:0005886">
    <property type="term" value="C:plasma membrane"/>
    <property type="evidence" value="ECO:0007669"/>
    <property type="project" value="UniProtKB-SubCell"/>
</dbReference>
<dbReference type="GO" id="GO:0051287">
    <property type="term" value="F:NAD binding"/>
    <property type="evidence" value="ECO:0007669"/>
    <property type="project" value="InterPro"/>
</dbReference>
<dbReference type="GO" id="GO:0050136">
    <property type="term" value="F:NADH:ubiquinone reductase (non-electrogenic) activity"/>
    <property type="evidence" value="ECO:0007669"/>
    <property type="project" value="UniProtKB-UniRule"/>
</dbReference>
<dbReference type="GO" id="GO:0048038">
    <property type="term" value="F:quinone binding"/>
    <property type="evidence" value="ECO:0007669"/>
    <property type="project" value="UniProtKB-KW"/>
</dbReference>
<dbReference type="FunFam" id="1.10.645.10:FF:000005">
    <property type="entry name" value="NADH-quinone oxidoreductase subunit D"/>
    <property type="match status" value="1"/>
</dbReference>
<dbReference type="Gene3D" id="1.10.645.10">
    <property type="entry name" value="Cytochrome-c3 Hydrogenase, chain B"/>
    <property type="match status" value="1"/>
</dbReference>
<dbReference type="HAMAP" id="MF_01358">
    <property type="entry name" value="NDH1_NuoD"/>
    <property type="match status" value="1"/>
</dbReference>
<dbReference type="InterPro" id="IPR001135">
    <property type="entry name" value="NADH_Q_OxRdtase_suD"/>
</dbReference>
<dbReference type="InterPro" id="IPR014029">
    <property type="entry name" value="NADH_UbQ_OxRdtase_49kDa_CS"/>
</dbReference>
<dbReference type="InterPro" id="IPR022885">
    <property type="entry name" value="NDH1_su_D/H"/>
</dbReference>
<dbReference type="InterPro" id="IPR029014">
    <property type="entry name" value="NiFe-Hase_large"/>
</dbReference>
<dbReference type="NCBIfam" id="TIGR01962">
    <property type="entry name" value="NuoD"/>
    <property type="match status" value="1"/>
</dbReference>
<dbReference type="NCBIfam" id="NF004739">
    <property type="entry name" value="PRK06075.1"/>
    <property type="match status" value="1"/>
</dbReference>
<dbReference type="PANTHER" id="PTHR11993:SF10">
    <property type="entry name" value="NADH DEHYDROGENASE [UBIQUINONE] IRON-SULFUR PROTEIN 2, MITOCHONDRIAL"/>
    <property type="match status" value="1"/>
</dbReference>
<dbReference type="PANTHER" id="PTHR11993">
    <property type="entry name" value="NADH-UBIQUINONE OXIDOREDUCTASE 49 KDA SUBUNIT"/>
    <property type="match status" value="1"/>
</dbReference>
<dbReference type="Pfam" id="PF00346">
    <property type="entry name" value="Complex1_49kDa"/>
    <property type="match status" value="1"/>
</dbReference>
<dbReference type="SUPFAM" id="SSF56762">
    <property type="entry name" value="HydB/Nqo4-like"/>
    <property type="match status" value="1"/>
</dbReference>
<dbReference type="PROSITE" id="PS00535">
    <property type="entry name" value="COMPLEX1_49K"/>
    <property type="match status" value="1"/>
</dbReference>
<sequence>MAEYKNYTLNFGPVHPAAHGVLRLILELDGENVVRADPHVGLLHRGTEKLAEFKPYNQSIGYMDRLDYVSMMCNEHAYVMAIEKLLQLEVPERAKYIRVMFAEMTRILNHLLWVAACGIDLGAMTVFLYAFRVREDLFDCYEAVSGARMHAAYFRPGGVARDLPTQMPQYQKTRFTSKRKAKKLNEPRQGSMLDFLDHFVVDFEKSLDEIDTLLTDNRLWKQRTVDIGTVTAERAKELGFTGPMLRGSGVAWDLRKTQPYEVYHKLEFDIPIGANGDCYDRYLVRMAEMRESNKLIKQCVDWLRANPGSVLSDNHKVAPPKRNAMKNNMEELIHHFKLFSEGYCTTEGEVYVGTEHPKGEFGVYIKSDGANKPYRLKMRAPGFAHISAMDELLSGHMLADTPAIISTIDVVFGDVDR</sequence>
<name>NUOD_FRATF</name>
<keyword id="KW-0997">Cell inner membrane</keyword>
<keyword id="KW-1003">Cell membrane</keyword>
<keyword id="KW-0472">Membrane</keyword>
<keyword id="KW-0520">NAD</keyword>
<keyword id="KW-0874">Quinone</keyword>
<keyword id="KW-1278">Translocase</keyword>
<keyword id="KW-0813">Transport</keyword>
<keyword id="KW-0830">Ubiquinone</keyword>
<protein>
    <recommendedName>
        <fullName evidence="1">NADH-quinone oxidoreductase subunit D</fullName>
        <ecNumber evidence="1">7.1.1.-</ecNumber>
    </recommendedName>
    <alternativeName>
        <fullName evidence="1">NADH dehydrogenase I subunit D</fullName>
    </alternativeName>
    <alternativeName>
        <fullName evidence="1">NDH-1 subunit D</fullName>
    </alternativeName>
</protein>
<gene>
    <name evidence="1" type="primary">nuoD</name>
    <name type="ordered locus">FTA_1935</name>
</gene>
<reference key="1">
    <citation type="journal article" date="2009" name="PLoS ONE">
        <title>Complete genome sequence of Francisella tularensis subspecies holarctica FTNF002-00.</title>
        <authorList>
            <person name="Barabote R.D."/>
            <person name="Xie G."/>
            <person name="Brettin T.S."/>
            <person name="Hinrichs S.H."/>
            <person name="Fey P.D."/>
            <person name="Jay J.J."/>
            <person name="Engle J.L."/>
            <person name="Godbole S.D."/>
            <person name="Noronha J.M."/>
            <person name="Scheuermann R.H."/>
            <person name="Zhou L.W."/>
            <person name="Lion C."/>
            <person name="Dempsey M.P."/>
        </authorList>
    </citation>
    <scope>NUCLEOTIDE SEQUENCE [LARGE SCALE GENOMIC DNA]</scope>
    <source>
        <strain>FTNF002-00 / FTA</strain>
    </source>
</reference>
<organism>
    <name type="scientific">Francisella tularensis subsp. holarctica (strain FTNF002-00 / FTA)</name>
    <dbReference type="NCBI Taxonomy" id="458234"/>
    <lineage>
        <taxon>Bacteria</taxon>
        <taxon>Pseudomonadati</taxon>
        <taxon>Pseudomonadota</taxon>
        <taxon>Gammaproteobacteria</taxon>
        <taxon>Thiotrichales</taxon>
        <taxon>Francisellaceae</taxon>
        <taxon>Francisella</taxon>
    </lineage>
</organism>
<comment type="function">
    <text evidence="1">NDH-1 shuttles electrons from NADH, via FMN and iron-sulfur (Fe-S) centers, to quinones in the respiratory chain. The immediate electron acceptor for the enzyme in this species is believed to be ubiquinone. Couples the redox reaction to proton translocation (for every two electrons transferred, four hydrogen ions are translocated across the cytoplasmic membrane), and thus conserves the redox energy in a proton gradient.</text>
</comment>
<comment type="catalytic activity">
    <reaction evidence="1">
        <text>a quinone + NADH + 5 H(+)(in) = a quinol + NAD(+) + 4 H(+)(out)</text>
        <dbReference type="Rhea" id="RHEA:57888"/>
        <dbReference type="ChEBI" id="CHEBI:15378"/>
        <dbReference type="ChEBI" id="CHEBI:24646"/>
        <dbReference type="ChEBI" id="CHEBI:57540"/>
        <dbReference type="ChEBI" id="CHEBI:57945"/>
        <dbReference type="ChEBI" id="CHEBI:132124"/>
    </reaction>
</comment>
<comment type="subunit">
    <text evidence="1">NDH-1 is composed of 14 different subunits. Subunits NuoB, C, D, E, F, and G constitute the peripheral sector of the complex.</text>
</comment>
<comment type="subcellular location">
    <subcellularLocation>
        <location evidence="1">Cell inner membrane</location>
        <topology evidence="1">Peripheral membrane protein</topology>
        <orientation evidence="1">Cytoplasmic side</orientation>
    </subcellularLocation>
</comment>
<comment type="similarity">
    <text evidence="1">Belongs to the complex I 49 kDa subunit family.</text>
</comment>
<proteinExistence type="inferred from homology"/>
<accession>A7NEK7</accession>
<evidence type="ECO:0000255" key="1">
    <source>
        <dbReference type="HAMAP-Rule" id="MF_01358"/>
    </source>
</evidence>